<proteinExistence type="inferred from homology"/>
<name>PEPA_TRIVH</name>
<dbReference type="EC" id="3.4.23.18"/>
<dbReference type="EMBL" id="ACYE01000156">
    <property type="protein sequence ID" value="EFE42250.1"/>
    <property type="molecule type" value="Genomic_DNA"/>
</dbReference>
<dbReference type="RefSeq" id="XP_003022868.1">
    <property type="nucleotide sequence ID" value="XM_003022822.1"/>
</dbReference>
<dbReference type="SMR" id="D4D7C5"/>
<dbReference type="GlyCosmos" id="D4D7C5">
    <property type="glycosylation" value="2 sites, No reported glycans"/>
</dbReference>
<dbReference type="GeneID" id="9581589"/>
<dbReference type="KEGG" id="tve:TRV_03007"/>
<dbReference type="HOGENOM" id="CLU_013253_0_1_1"/>
<dbReference type="OrthoDB" id="2554at34384"/>
<dbReference type="Proteomes" id="UP000008383">
    <property type="component" value="Unassembled WGS sequence"/>
</dbReference>
<dbReference type="GO" id="GO:0005576">
    <property type="term" value="C:extracellular region"/>
    <property type="evidence" value="ECO:0007669"/>
    <property type="project" value="UniProtKB-SubCell"/>
</dbReference>
<dbReference type="GO" id="GO:0004190">
    <property type="term" value="F:aspartic-type endopeptidase activity"/>
    <property type="evidence" value="ECO:0007669"/>
    <property type="project" value="UniProtKB-KW"/>
</dbReference>
<dbReference type="GO" id="GO:0006508">
    <property type="term" value="P:proteolysis"/>
    <property type="evidence" value="ECO:0007669"/>
    <property type="project" value="UniProtKB-KW"/>
</dbReference>
<dbReference type="CDD" id="cd06097">
    <property type="entry name" value="Aspergillopepsin_like"/>
    <property type="match status" value="1"/>
</dbReference>
<dbReference type="FunFam" id="2.40.70.10:FF:000024">
    <property type="entry name" value="Endothiapepsin"/>
    <property type="match status" value="1"/>
</dbReference>
<dbReference type="FunFam" id="2.40.70.10:FF:000026">
    <property type="entry name" value="Endothiapepsin"/>
    <property type="match status" value="1"/>
</dbReference>
<dbReference type="Gene3D" id="2.40.70.10">
    <property type="entry name" value="Acid Proteases"/>
    <property type="match status" value="2"/>
</dbReference>
<dbReference type="InterPro" id="IPR001461">
    <property type="entry name" value="Aspartic_peptidase_A1"/>
</dbReference>
<dbReference type="InterPro" id="IPR001969">
    <property type="entry name" value="Aspartic_peptidase_AS"/>
</dbReference>
<dbReference type="InterPro" id="IPR034163">
    <property type="entry name" value="Aspergillopepsin-like_cat_dom"/>
</dbReference>
<dbReference type="InterPro" id="IPR033121">
    <property type="entry name" value="PEPTIDASE_A1"/>
</dbReference>
<dbReference type="InterPro" id="IPR021109">
    <property type="entry name" value="Peptidase_aspartic_dom_sf"/>
</dbReference>
<dbReference type="PANTHER" id="PTHR47966:SF2">
    <property type="entry name" value="ASPERGILLOPEPSIN-1-RELATED"/>
    <property type="match status" value="1"/>
</dbReference>
<dbReference type="PANTHER" id="PTHR47966">
    <property type="entry name" value="BETA-SITE APP-CLEAVING ENZYME, ISOFORM A-RELATED"/>
    <property type="match status" value="1"/>
</dbReference>
<dbReference type="Pfam" id="PF00026">
    <property type="entry name" value="Asp"/>
    <property type="match status" value="1"/>
</dbReference>
<dbReference type="PRINTS" id="PR00792">
    <property type="entry name" value="PEPSIN"/>
</dbReference>
<dbReference type="SUPFAM" id="SSF50630">
    <property type="entry name" value="Acid proteases"/>
    <property type="match status" value="1"/>
</dbReference>
<dbReference type="PROSITE" id="PS00141">
    <property type="entry name" value="ASP_PROTEASE"/>
    <property type="match status" value="1"/>
</dbReference>
<dbReference type="PROSITE" id="PS51767">
    <property type="entry name" value="PEPTIDASE_A1"/>
    <property type="match status" value="1"/>
</dbReference>
<sequence>MVQISQIGAVLAVCSTLTVAAPTKGKARFNVPQVAVPMKAVHHPAVAYARALHKFGMKVPKAVSDAARGSVPTTPTKDDEQYVTQVTVGQGKLNLDLDTGSGDLWVFSTETPKDQSQGHNLYMPTSKSKRLDGYSWEITYGDMSSAGGDVFLDTVSIGNVTASSQAVESAKKVSDQFAKDKATDGLMGLSFSVLNTVQPKPQTTFFDTVLKQLEKPLFTCTLKHGQPGSYDFGYIDDSKHSGEIAYTNVDNSQGWWGFTAESYSIGGGSNSTHSFHGAQHHGARGSSIDGIADTGTTLMLLSDDVVQEYYKQVQGAKNDQQQGGWVFPCDAKLPDFTLSISGYNAVVPGKFMNYQAVGSVCFGGLQSVGSSGGVPNIFGDVFLKSQFVVWDTEGPRIGFAPQA</sequence>
<reference key="1">
    <citation type="journal article" date="2011" name="Genome Biol.">
        <title>Comparative and functional genomics provide insights into the pathogenicity of dermatophytic fungi.</title>
        <authorList>
            <person name="Burmester A."/>
            <person name="Shelest E."/>
            <person name="Gloeckner G."/>
            <person name="Heddergott C."/>
            <person name="Schindler S."/>
            <person name="Staib P."/>
            <person name="Heidel A."/>
            <person name="Felder M."/>
            <person name="Petzold A."/>
            <person name="Szafranski K."/>
            <person name="Feuermann M."/>
            <person name="Pedruzzi I."/>
            <person name="Priebe S."/>
            <person name="Groth M."/>
            <person name="Winkler R."/>
            <person name="Li W."/>
            <person name="Kniemeyer O."/>
            <person name="Schroeckh V."/>
            <person name="Hertweck C."/>
            <person name="Hube B."/>
            <person name="White T.C."/>
            <person name="Platzer M."/>
            <person name="Guthke R."/>
            <person name="Heitman J."/>
            <person name="Woestemeyer J."/>
            <person name="Zipfel P.F."/>
            <person name="Monod M."/>
            <person name="Brakhage A.A."/>
        </authorList>
    </citation>
    <scope>NUCLEOTIDE SEQUENCE [LARGE SCALE GENOMIC DNA]</scope>
    <source>
        <strain>HKI 0517</strain>
    </source>
</reference>
<comment type="function">
    <text evidence="1">Secreted aspartic endopeptidase that allows assimilation of proteinaceous substrates. Can catalyze hydrolysis of the major structural proteins of basement membrane, elastin, collagen, and laminin. Thought to play a significant role in virulence (By similarity).</text>
</comment>
<comment type="function">
    <text evidence="1">Can catalyze hydrolysis of the major structural proteins of basement membrane, elastin, collagen, and laminin. Thought to play a significant role in virulence (By similarity).</text>
</comment>
<comment type="catalytic activity">
    <reaction>
        <text>Hydrolysis of proteins with broad specificity. Generally favors hydrophobic residues in P1 and P1', but also accepts Lys in P1, which leads to activation of trypsinogen. Does not clot milk.</text>
        <dbReference type="EC" id="3.4.23.18"/>
    </reaction>
</comment>
<comment type="subcellular location">
    <subcellularLocation>
        <location evidence="1">Secreted</location>
    </subcellularLocation>
</comment>
<comment type="similarity">
    <text evidence="5">Belongs to the peptidase A1 family.</text>
</comment>
<accession>D4D7C5</accession>
<gene>
    <name type="primary">PEP1</name>
    <name type="ORF">TRV_03007</name>
</gene>
<keyword id="KW-0064">Aspartyl protease</keyword>
<keyword id="KW-1015">Disulfide bond</keyword>
<keyword id="KW-0325">Glycoprotein</keyword>
<keyword id="KW-0378">Hydrolase</keyword>
<keyword id="KW-0645">Protease</keyword>
<keyword id="KW-0964">Secreted</keyword>
<keyword id="KW-0732">Signal</keyword>
<keyword id="KW-0843">Virulence</keyword>
<keyword id="KW-0865">Zymogen</keyword>
<feature type="signal peptide" evidence="2">
    <location>
        <begin position="1"/>
        <end position="20"/>
    </location>
</feature>
<feature type="propeptide" id="PRO_0000397714" description="Activation peptide" evidence="1">
    <location>
        <begin position="21"/>
        <end position="67"/>
    </location>
</feature>
<feature type="chain" id="PRO_0000397715" description="Aspartic endopeptidase PEP1">
    <location>
        <begin position="68"/>
        <end position="403"/>
    </location>
</feature>
<feature type="domain" description="Peptidase A1" evidence="3">
    <location>
        <begin position="82"/>
        <end position="400"/>
    </location>
</feature>
<feature type="active site" evidence="4">
    <location>
        <position position="98"/>
    </location>
</feature>
<feature type="active site" evidence="4">
    <location>
        <position position="293"/>
    </location>
</feature>
<feature type="glycosylation site" description="N-linked (GlcNAc...) asparagine" evidence="2">
    <location>
        <position position="159"/>
    </location>
</feature>
<feature type="glycosylation site" description="N-linked (GlcNAc...) asparagine" evidence="2">
    <location>
        <position position="270"/>
    </location>
</feature>
<feature type="disulfide bond" evidence="1">
    <location>
        <begin position="329"/>
        <end position="361"/>
    </location>
</feature>
<organism>
    <name type="scientific">Trichophyton verrucosum (strain HKI 0517)</name>
    <dbReference type="NCBI Taxonomy" id="663202"/>
    <lineage>
        <taxon>Eukaryota</taxon>
        <taxon>Fungi</taxon>
        <taxon>Dikarya</taxon>
        <taxon>Ascomycota</taxon>
        <taxon>Pezizomycotina</taxon>
        <taxon>Eurotiomycetes</taxon>
        <taxon>Eurotiomycetidae</taxon>
        <taxon>Onygenales</taxon>
        <taxon>Arthrodermataceae</taxon>
        <taxon>Trichophyton</taxon>
    </lineage>
</organism>
<protein>
    <recommendedName>
        <fullName>Aspartic endopeptidase PEP1</fullName>
        <ecNumber>3.4.23.18</ecNumber>
    </recommendedName>
    <alternativeName>
        <fullName>Aspergillopepsin I</fullName>
    </alternativeName>
</protein>
<evidence type="ECO:0000250" key="1"/>
<evidence type="ECO:0000255" key="2"/>
<evidence type="ECO:0000255" key="3">
    <source>
        <dbReference type="PROSITE-ProRule" id="PRU01103"/>
    </source>
</evidence>
<evidence type="ECO:0000255" key="4">
    <source>
        <dbReference type="PROSITE-ProRule" id="PRU10094"/>
    </source>
</evidence>
<evidence type="ECO:0000305" key="5"/>